<reference key="1">
    <citation type="journal article" date="2001" name="Proc. Natl. Acad. Sci. U.S.A.">
        <title>Analysis of the chromosome sequence of the legume symbiont Sinorhizobium meliloti strain 1021.</title>
        <authorList>
            <person name="Capela D."/>
            <person name="Barloy-Hubler F."/>
            <person name="Gouzy J."/>
            <person name="Bothe G."/>
            <person name="Ampe F."/>
            <person name="Batut J."/>
            <person name="Boistard P."/>
            <person name="Becker A."/>
            <person name="Boutry M."/>
            <person name="Cadieu E."/>
            <person name="Dreano S."/>
            <person name="Gloux S."/>
            <person name="Godrie T."/>
            <person name="Goffeau A."/>
            <person name="Kahn D."/>
            <person name="Kiss E."/>
            <person name="Lelaure V."/>
            <person name="Masuy D."/>
            <person name="Pohl T."/>
            <person name="Portetelle D."/>
            <person name="Puehler A."/>
            <person name="Purnelle B."/>
            <person name="Ramsperger U."/>
            <person name="Renard C."/>
            <person name="Thebault P."/>
            <person name="Vandenbol M."/>
            <person name="Weidner S."/>
            <person name="Galibert F."/>
        </authorList>
    </citation>
    <scope>NUCLEOTIDE SEQUENCE [LARGE SCALE GENOMIC DNA]</scope>
    <source>
        <strain>1021</strain>
    </source>
</reference>
<reference key="2">
    <citation type="journal article" date="2001" name="Science">
        <title>The composite genome of the legume symbiont Sinorhizobium meliloti.</title>
        <authorList>
            <person name="Galibert F."/>
            <person name="Finan T.M."/>
            <person name="Long S.R."/>
            <person name="Puehler A."/>
            <person name="Abola P."/>
            <person name="Ampe F."/>
            <person name="Barloy-Hubler F."/>
            <person name="Barnett M.J."/>
            <person name="Becker A."/>
            <person name="Boistard P."/>
            <person name="Bothe G."/>
            <person name="Boutry M."/>
            <person name="Bowser L."/>
            <person name="Buhrmester J."/>
            <person name="Cadieu E."/>
            <person name="Capela D."/>
            <person name="Chain P."/>
            <person name="Cowie A."/>
            <person name="Davis R.W."/>
            <person name="Dreano S."/>
            <person name="Federspiel N.A."/>
            <person name="Fisher R.F."/>
            <person name="Gloux S."/>
            <person name="Godrie T."/>
            <person name="Goffeau A."/>
            <person name="Golding B."/>
            <person name="Gouzy J."/>
            <person name="Gurjal M."/>
            <person name="Hernandez-Lucas I."/>
            <person name="Hong A."/>
            <person name="Huizar L."/>
            <person name="Hyman R.W."/>
            <person name="Jones T."/>
            <person name="Kahn D."/>
            <person name="Kahn M.L."/>
            <person name="Kalman S."/>
            <person name="Keating D.H."/>
            <person name="Kiss E."/>
            <person name="Komp C."/>
            <person name="Lelaure V."/>
            <person name="Masuy D."/>
            <person name="Palm C."/>
            <person name="Peck M.C."/>
            <person name="Pohl T.M."/>
            <person name="Portetelle D."/>
            <person name="Purnelle B."/>
            <person name="Ramsperger U."/>
            <person name="Surzycki R."/>
            <person name="Thebault P."/>
            <person name="Vandenbol M."/>
            <person name="Vorhoelter F.J."/>
            <person name="Weidner S."/>
            <person name="Wells D.H."/>
            <person name="Wong K."/>
            <person name="Yeh K.-C."/>
            <person name="Batut J."/>
        </authorList>
    </citation>
    <scope>NUCLEOTIDE SEQUENCE [LARGE SCALE GENOMIC DNA]</scope>
    <source>
        <strain>1021</strain>
    </source>
</reference>
<sequence>MRQYLDLLEHVITTGTDRGDRTGTGTRSVFGYQMRFDLSQGFPVLTTKKLHLRSIIHELLWFLRGDTNVAYLKDNGVSIWDEWADENGELGPVYGYQWRSWPTPDGRHIDQIAALVEGLKTNPNSRRHIVSAWNPALVDEMALPPCHCLFQFYVADGKLSCQLYQRSADIFLGVPFNIASYALLTMMVAQVTGLEAGDFVHTLGDAHIYRNHFEQAQLQLTRTPKPLPKMEINPAVKDIFSFRFEDFELVGYEADSHIKAPVAV</sequence>
<gene>
    <name evidence="1" type="primary">thyA</name>
    <name type="ordered locus">R02127</name>
    <name type="ORF">SMc01444</name>
</gene>
<accession>Q92NQ5</accession>
<keyword id="KW-0963">Cytoplasm</keyword>
<keyword id="KW-0489">Methyltransferase</keyword>
<keyword id="KW-0545">Nucleotide biosynthesis</keyword>
<keyword id="KW-1185">Reference proteome</keyword>
<keyword id="KW-0808">Transferase</keyword>
<dbReference type="EC" id="2.1.1.45" evidence="1"/>
<dbReference type="EMBL" id="AL591688">
    <property type="protein sequence ID" value="CAC46706.1"/>
    <property type="molecule type" value="Genomic_DNA"/>
</dbReference>
<dbReference type="RefSeq" id="NP_386233.1">
    <property type="nucleotide sequence ID" value="NC_003047.1"/>
</dbReference>
<dbReference type="RefSeq" id="WP_010969714.1">
    <property type="nucleotide sequence ID" value="NC_003047.1"/>
</dbReference>
<dbReference type="SMR" id="Q92NQ5"/>
<dbReference type="EnsemblBacteria" id="CAC46706">
    <property type="protein sequence ID" value="CAC46706"/>
    <property type="gene ID" value="SMc01444"/>
</dbReference>
<dbReference type="KEGG" id="sme:SMc01444"/>
<dbReference type="PATRIC" id="fig|266834.11.peg.3586"/>
<dbReference type="eggNOG" id="COG0207">
    <property type="taxonomic scope" value="Bacteria"/>
</dbReference>
<dbReference type="HOGENOM" id="CLU_021669_0_0_5"/>
<dbReference type="OrthoDB" id="9774633at2"/>
<dbReference type="UniPathway" id="UPA00575"/>
<dbReference type="Proteomes" id="UP000001976">
    <property type="component" value="Chromosome"/>
</dbReference>
<dbReference type="GO" id="GO:0005829">
    <property type="term" value="C:cytosol"/>
    <property type="evidence" value="ECO:0007669"/>
    <property type="project" value="TreeGrafter"/>
</dbReference>
<dbReference type="GO" id="GO:0004799">
    <property type="term" value="F:thymidylate synthase activity"/>
    <property type="evidence" value="ECO:0007669"/>
    <property type="project" value="UniProtKB-UniRule"/>
</dbReference>
<dbReference type="GO" id="GO:0006231">
    <property type="term" value="P:dTMP biosynthetic process"/>
    <property type="evidence" value="ECO:0007669"/>
    <property type="project" value="UniProtKB-UniRule"/>
</dbReference>
<dbReference type="GO" id="GO:0006235">
    <property type="term" value="P:dTTP biosynthetic process"/>
    <property type="evidence" value="ECO:0007669"/>
    <property type="project" value="UniProtKB-UniRule"/>
</dbReference>
<dbReference type="GO" id="GO:0032259">
    <property type="term" value="P:methylation"/>
    <property type="evidence" value="ECO:0007669"/>
    <property type="project" value="UniProtKB-KW"/>
</dbReference>
<dbReference type="CDD" id="cd00351">
    <property type="entry name" value="TS_Pyrimidine_HMase"/>
    <property type="match status" value="1"/>
</dbReference>
<dbReference type="FunFam" id="3.30.572.10:FF:000001">
    <property type="entry name" value="Thymidylate synthase"/>
    <property type="match status" value="1"/>
</dbReference>
<dbReference type="Gene3D" id="3.30.572.10">
    <property type="entry name" value="Thymidylate synthase/dCMP hydroxymethylase domain"/>
    <property type="match status" value="1"/>
</dbReference>
<dbReference type="HAMAP" id="MF_00008">
    <property type="entry name" value="Thymidy_synth_bact"/>
    <property type="match status" value="1"/>
</dbReference>
<dbReference type="InterPro" id="IPR045097">
    <property type="entry name" value="Thymidate_synth/dCMP_Mease"/>
</dbReference>
<dbReference type="InterPro" id="IPR023451">
    <property type="entry name" value="Thymidate_synth/dCMP_Mease_dom"/>
</dbReference>
<dbReference type="InterPro" id="IPR036926">
    <property type="entry name" value="Thymidate_synth/dCMP_Mease_sf"/>
</dbReference>
<dbReference type="InterPro" id="IPR000398">
    <property type="entry name" value="Thymidylate_synthase"/>
</dbReference>
<dbReference type="InterPro" id="IPR020940">
    <property type="entry name" value="Thymidylate_synthase_AS"/>
</dbReference>
<dbReference type="NCBIfam" id="NF002497">
    <property type="entry name" value="PRK01827.1-3"/>
    <property type="match status" value="1"/>
</dbReference>
<dbReference type="NCBIfam" id="NF002499">
    <property type="entry name" value="PRK01827.1-5"/>
    <property type="match status" value="1"/>
</dbReference>
<dbReference type="NCBIfam" id="TIGR03284">
    <property type="entry name" value="thym_sym"/>
    <property type="match status" value="2"/>
</dbReference>
<dbReference type="PANTHER" id="PTHR11548:SF9">
    <property type="entry name" value="THYMIDYLATE SYNTHASE"/>
    <property type="match status" value="1"/>
</dbReference>
<dbReference type="PANTHER" id="PTHR11548">
    <property type="entry name" value="THYMIDYLATE SYNTHASE 1"/>
    <property type="match status" value="1"/>
</dbReference>
<dbReference type="Pfam" id="PF00303">
    <property type="entry name" value="Thymidylat_synt"/>
    <property type="match status" value="1"/>
</dbReference>
<dbReference type="PRINTS" id="PR00108">
    <property type="entry name" value="THYMDSNTHASE"/>
</dbReference>
<dbReference type="SUPFAM" id="SSF55831">
    <property type="entry name" value="Thymidylate synthase/dCMP hydroxymethylase"/>
    <property type="match status" value="1"/>
</dbReference>
<dbReference type="PROSITE" id="PS00091">
    <property type="entry name" value="THYMIDYLATE_SYNTHASE"/>
    <property type="match status" value="1"/>
</dbReference>
<comment type="function">
    <text evidence="1">Catalyzes the reductive methylation of 2'-deoxyuridine-5'-monophosphate (dUMP) to 2'-deoxythymidine-5'-monophosphate (dTMP) while utilizing 5,10-methylenetetrahydrofolate (mTHF) as the methyl donor and reductant in the reaction, yielding dihydrofolate (DHF) as a by-product. This enzymatic reaction provides an intracellular de novo source of dTMP, an essential precursor for DNA biosynthesis.</text>
</comment>
<comment type="catalytic activity">
    <reaction evidence="1">
        <text>dUMP + (6R)-5,10-methylene-5,6,7,8-tetrahydrofolate = 7,8-dihydrofolate + dTMP</text>
        <dbReference type="Rhea" id="RHEA:12104"/>
        <dbReference type="ChEBI" id="CHEBI:15636"/>
        <dbReference type="ChEBI" id="CHEBI:57451"/>
        <dbReference type="ChEBI" id="CHEBI:63528"/>
        <dbReference type="ChEBI" id="CHEBI:246422"/>
        <dbReference type="EC" id="2.1.1.45"/>
    </reaction>
</comment>
<comment type="pathway">
    <text evidence="1">Pyrimidine metabolism; dTTP biosynthesis.</text>
</comment>
<comment type="subunit">
    <text evidence="1">Homodimer.</text>
</comment>
<comment type="subcellular location">
    <subcellularLocation>
        <location evidence="1">Cytoplasm</location>
    </subcellularLocation>
</comment>
<comment type="similarity">
    <text evidence="1">Belongs to the thymidylate synthase family. Bacterial-type ThyA subfamily.</text>
</comment>
<name>TYSY_RHIME</name>
<evidence type="ECO:0000255" key="1">
    <source>
        <dbReference type="HAMAP-Rule" id="MF_00008"/>
    </source>
</evidence>
<organism>
    <name type="scientific">Rhizobium meliloti (strain 1021)</name>
    <name type="common">Ensifer meliloti</name>
    <name type="synonym">Sinorhizobium meliloti</name>
    <dbReference type="NCBI Taxonomy" id="266834"/>
    <lineage>
        <taxon>Bacteria</taxon>
        <taxon>Pseudomonadati</taxon>
        <taxon>Pseudomonadota</taxon>
        <taxon>Alphaproteobacteria</taxon>
        <taxon>Hyphomicrobiales</taxon>
        <taxon>Rhizobiaceae</taxon>
        <taxon>Sinorhizobium/Ensifer group</taxon>
        <taxon>Sinorhizobium</taxon>
    </lineage>
</organism>
<protein>
    <recommendedName>
        <fullName evidence="1">Thymidylate synthase</fullName>
        <shortName evidence="1">TS</shortName>
        <shortName evidence="1">TSase</shortName>
        <ecNumber evidence="1">2.1.1.45</ecNumber>
    </recommendedName>
</protein>
<feature type="chain" id="PRO_0000141009" description="Thymidylate synthase">
    <location>
        <begin position="1"/>
        <end position="264"/>
    </location>
</feature>
<feature type="active site" description="Nucleophile" evidence="1">
    <location>
        <position position="146"/>
    </location>
</feature>
<feature type="binding site" description="in other chain" evidence="1">
    <location>
        <position position="21"/>
    </location>
    <ligand>
        <name>dUMP</name>
        <dbReference type="ChEBI" id="CHEBI:246422"/>
        <note>ligand shared between dimeric partners</note>
    </ligand>
</feature>
<feature type="binding site" evidence="1">
    <location>
        <position position="51"/>
    </location>
    <ligand>
        <name>(6R)-5,10-methylene-5,6,7,8-tetrahydrofolate</name>
        <dbReference type="ChEBI" id="CHEBI:15636"/>
    </ligand>
</feature>
<feature type="binding site" evidence="1">
    <location>
        <begin position="126"/>
        <end position="127"/>
    </location>
    <ligand>
        <name>dUMP</name>
        <dbReference type="ChEBI" id="CHEBI:246422"/>
        <note>ligand shared between dimeric partners</note>
    </ligand>
</feature>
<feature type="binding site" description="in other chain" evidence="1">
    <location>
        <begin position="166"/>
        <end position="169"/>
    </location>
    <ligand>
        <name>dUMP</name>
        <dbReference type="ChEBI" id="CHEBI:246422"/>
        <note>ligand shared between dimeric partners</note>
    </ligand>
</feature>
<feature type="binding site" evidence="1">
    <location>
        <position position="169"/>
    </location>
    <ligand>
        <name>(6R)-5,10-methylene-5,6,7,8-tetrahydrofolate</name>
        <dbReference type="ChEBI" id="CHEBI:15636"/>
    </ligand>
</feature>
<feature type="binding site" description="in other chain" evidence="1">
    <location>
        <position position="177"/>
    </location>
    <ligand>
        <name>dUMP</name>
        <dbReference type="ChEBI" id="CHEBI:246422"/>
        <note>ligand shared between dimeric partners</note>
    </ligand>
</feature>
<feature type="binding site" description="in other chain" evidence="1">
    <location>
        <begin position="207"/>
        <end position="209"/>
    </location>
    <ligand>
        <name>dUMP</name>
        <dbReference type="ChEBI" id="CHEBI:246422"/>
        <note>ligand shared between dimeric partners</note>
    </ligand>
</feature>
<feature type="binding site" evidence="1">
    <location>
        <position position="263"/>
    </location>
    <ligand>
        <name>(6R)-5,10-methylene-5,6,7,8-tetrahydrofolate</name>
        <dbReference type="ChEBI" id="CHEBI:15636"/>
    </ligand>
</feature>
<proteinExistence type="inferred from homology"/>